<reference key="1">
    <citation type="journal article" date="2003" name="Nucleic Acids Res.">
        <title>What's in the genome of a filamentous fungus? Analysis of the Neurospora genome sequence.</title>
        <authorList>
            <person name="Mannhaupt G."/>
            <person name="Montrone C."/>
            <person name="Haase D."/>
            <person name="Mewes H.-W."/>
            <person name="Aign V."/>
            <person name="Hoheisel J.D."/>
            <person name="Fartmann B."/>
            <person name="Nyakatura G."/>
            <person name="Kempken F."/>
            <person name="Maier J."/>
            <person name="Schulte U."/>
        </authorList>
    </citation>
    <scope>NUCLEOTIDE SEQUENCE [LARGE SCALE GENOMIC DNA]</scope>
    <source>
        <strain>ATCC 24698 / 74-OR23-1A / CBS 708.71 / DSM 1257 / FGSC 987</strain>
    </source>
</reference>
<reference key="2">
    <citation type="journal article" date="2003" name="Nature">
        <title>The genome sequence of the filamentous fungus Neurospora crassa.</title>
        <authorList>
            <person name="Galagan J.E."/>
            <person name="Calvo S.E."/>
            <person name="Borkovich K.A."/>
            <person name="Selker E.U."/>
            <person name="Read N.D."/>
            <person name="Jaffe D.B."/>
            <person name="FitzHugh W."/>
            <person name="Ma L.-J."/>
            <person name="Smirnov S."/>
            <person name="Purcell S."/>
            <person name="Rehman B."/>
            <person name="Elkins T."/>
            <person name="Engels R."/>
            <person name="Wang S."/>
            <person name="Nielsen C.B."/>
            <person name="Butler J."/>
            <person name="Endrizzi M."/>
            <person name="Qui D."/>
            <person name="Ianakiev P."/>
            <person name="Bell-Pedersen D."/>
            <person name="Nelson M.A."/>
            <person name="Werner-Washburne M."/>
            <person name="Selitrennikoff C.P."/>
            <person name="Kinsey J.A."/>
            <person name="Braun E.L."/>
            <person name="Zelter A."/>
            <person name="Schulte U."/>
            <person name="Kothe G.O."/>
            <person name="Jedd G."/>
            <person name="Mewes H.-W."/>
            <person name="Staben C."/>
            <person name="Marcotte E."/>
            <person name="Greenberg D."/>
            <person name="Roy A."/>
            <person name="Foley K."/>
            <person name="Naylor J."/>
            <person name="Stange-Thomann N."/>
            <person name="Barrett R."/>
            <person name="Gnerre S."/>
            <person name="Kamal M."/>
            <person name="Kamvysselis M."/>
            <person name="Mauceli E.W."/>
            <person name="Bielke C."/>
            <person name="Rudd S."/>
            <person name="Frishman D."/>
            <person name="Krystofova S."/>
            <person name="Rasmussen C."/>
            <person name="Metzenberg R.L."/>
            <person name="Perkins D.D."/>
            <person name="Kroken S."/>
            <person name="Cogoni C."/>
            <person name="Macino G."/>
            <person name="Catcheside D.E.A."/>
            <person name="Li W."/>
            <person name="Pratt R.J."/>
            <person name="Osmani S.A."/>
            <person name="DeSouza C.P.C."/>
            <person name="Glass N.L."/>
            <person name="Orbach M.J."/>
            <person name="Berglund J.A."/>
            <person name="Voelker R."/>
            <person name="Yarden O."/>
            <person name="Plamann M."/>
            <person name="Seiler S."/>
            <person name="Dunlap J.C."/>
            <person name="Radford A."/>
            <person name="Aramayo R."/>
            <person name="Natvig D.O."/>
            <person name="Alex L.A."/>
            <person name="Mannhaupt G."/>
            <person name="Ebbole D.J."/>
            <person name="Freitag M."/>
            <person name="Paulsen I."/>
            <person name="Sachs M.S."/>
            <person name="Lander E.S."/>
            <person name="Nusbaum C."/>
            <person name="Birren B.W."/>
        </authorList>
    </citation>
    <scope>NUCLEOTIDE SEQUENCE [LARGE SCALE GENOMIC DNA]</scope>
    <source>
        <strain>ATCC 24698 / 74-OR23-1A / CBS 708.71 / DSM 1257 / FGSC 987</strain>
    </source>
</reference>
<keyword id="KW-0963">Cytoplasm</keyword>
<keyword id="KW-0276">Fatty acid metabolism</keyword>
<keyword id="KW-0378">Hydrolase</keyword>
<keyword id="KW-0443">Lipid metabolism</keyword>
<keyword id="KW-0539">Nucleus</keyword>
<keyword id="KW-1185">Reference proteome</keyword>
<keyword id="KW-0719">Serine esterase</keyword>
<comment type="function">
    <text evidence="2">Hydrolyzes fatty acids from S-acylated cysteine residues in proteins with a strong preference for palmitoylated G-alpha proteins over other acyl substrates. Mediates the deacylation of G-alpha proteins such as GPA1 in vivo, but has weak or no activity toward palmitoylated Ras proteins. Has weak lysophospholipase activity in vitro; however such activity may not exist in vivo.</text>
</comment>
<comment type="catalytic activity">
    <reaction evidence="2">
        <text>S-hexadecanoyl-L-cysteinyl-[protein] + H2O = L-cysteinyl-[protein] + hexadecanoate + H(+)</text>
        <dbReference type="Rhea" id="RHEA:19233"/>
        <dbReference type="Rhea" id="RHEA-COMP:10131"/>
        <dbReference type="Rhea" id="RHEA-COMP:11032"/>
        <dbReference type="ChEBI" id="CHEBI:7896"/>
        <dbReference type="ChEBI" id="CHEBI:15377"/>
        <dbReference type="ChEBI" id="CHEBI:15378"/>
        <dbReference type="ChEBI" id="CHEBI:29950"/>
        <dbReference type="ChEBI" id="CHEBI:74151"/>
        <dbReference type="EC" id="3.1.2.22"/>
    </reaction>
</comment>
<comment type="subcellular location">
    <subcellularLocation>
        <location evidence="2">Cytoplasm</location>
    </subcellularLocation>
    <subcellularLocation>
        <location evidence="2">Nucleus</location>
    </subcellularLocation>
</comment>
<comment type="similarity">
    <text evidence="3">Belongs to the AB hydrolase superfamily. AB hydrolase 2 family.</text>
</comment>
<sequence>MASLARRPPLLVPAVARHTATVIFIHGLGDTGHGWASAVEQWRRRQRLDEVKFILPHAPSIPITANWGMKMPGWYDIFAIDGSAEALRRNEDEAGILTSQAYFHDLIQKEIDSGIPADRIVIGGFSQGGAMGLFSGLTAKCKLAGIIALSSYLLLSLKFAELVPKPEFNKETPIFMAHGDADPVVNYKLGTMTRDLLKEMGYNVKFTTYPGMGHSACLEELDAIEDFLTERLPKVADKSEQKSEL</sequence>
<proteinExistence type="inferred from homology"/>
<evidence type="ECO:0000250" key="1"/>
<evidence type="ECO:0000250" key="2">
    <source>
        <dbReference type="UniProtKB" id="Q12354"/>
    </source>
</evidence>
<evidence type="ECO:0000305" key="3"/>
<protein>
    <recommendedName>
        <fullName>Acyl-protein thioesterase 1</fullName>
        <ecNumber evidence="2">3.1.2.-</ecNumber>
    </recommendedName>
    <alternativeName>
        <fullName>Palmitoyl-protein hydrolase</fullName>
        <ecNumber evidence="2">3.1.2.22</ecNumber>
    </alternativeName>
</protein>
<organism>
    <name type="scientific">Neurospora crassa (strain ATCC 24698 / 74-OR23-1A / CBS 708.71 / DSM 1257 / FGSC 987)</name>
    <dbReference type="NCBI Taxonomy" id="367110"/>
    <lineage>
        <taxon>Eukaryota</taxon>
        <taxon>Fungi</taxon>
        <taxon>Dikarya</taxon>
        <taxon>Ascomycota</taxon>
        <taxon>Pezizomycotina</taxon>
        <taxon>Sordariomycetes</taxon>
        <taxon>Sordariomycetidae</taxon>
        <taxon>Sordariales</taxon>
        <taxon>Sordariaceae</taxon>
        <taxon>Neurospora</taxon>
    </lineage>
</organism>
<name>APTH1_NEUCR</name>
<feature type="chain" id="PRO_0000229012" description="Acyl-protein thioesterase 1">
    <location>
        <begin position="1"/>
        <end position="245"/>
    </location>
</feature>
<feature type="active site" description="Charge relay system" evidence="1">
    <location>
        <position position="126"/>
    </location>
</feature>
<feature type="active site" description="Charge relay system" evidence="1">
    <location>
        <position position="182"/>
    </location>
</feature>
<feature type="active site" description="Charge relay system" evidence="1">
    <location>
        <position position="214"/>
    </location>
</feature>
<gene>
    <name type="ORF">B2J23.070</name>
    <name type="ORF">NCU02027</name>
</gene>
<accession>Q9HFJ5</accession>
<accession>Q1K922</accession>
<dbReference type="EC" id="3.1.2.-" evidence="2"/>
<dbReference type="EC" id="3.1.2.22" evidence="2"/>
<dbReference type="EMBL" id="AL442164">
    <property type="protein sequence ID" value="CAC10084.2"/>
    <property type="molecule type" value="Genomic_DNA"/>
</dbReference>
<dbReference type="EMBL" id="CM002236">
    <property type="protein sequence ID" value="EAA35413.1"/>
    <property type="molecule type" value="Genomic_DNA"/>
</dbReference>
<dbReference type="PIR" id="T52511">
    <property type="entry name" value="T52511"/>
</dbReference>
<dbReference type="RefSeq" id="XP_964649.1">
    <property type="nucleotide sequence ID" value="XM_959556.2"/>
</dbReference>
<dbReference type="SMR" id="Q9HFJ5"/>
<dbReference type="FunCoup" id="Q9HFJ5">
    <property type="interactions" value="466"/>
</dbReference>
<dbReference type="STRING" id="367110.Q9HFJ5"/>
<dbReference type="ESTHER" id="neucr-apth1">
    <property type="family name" value="LYsophospholipase_carboxylesterase"/>
</dbReference>
<dbReference type="MEROPS" id="S09.941"/>
<dbReference type="PaxDb" id="5141-EFNCRP00000001200"/>
<dbReference type="EnsemblFungi" id="EAA35413">
    <property type="protein sequence ID" value="EAA35413"/>
    <property type="gene ID" value="NCU02027"/>
</dbReference>
<dbReference type="GeneID" id="3880814"/>
<dbReference type="KEGG" id="ncr:NCU02027"/>
<dbReference type="VEuPathDB" id="FungiDB:NCU02027"/>
<dbReference type="HOGENOM" id="CLU_049413_3_8_1"/>
<dbReference type="InParanoid" id="Q9HFJ5"/>
<dbReference type="OrthoDB" id="2418081at2759"/>
<dbReference type="Proteomes" id="UP000001805">
    <property type="component" value="Chromosome 1, Linkage Group I"/>
</dbReference>
<dbReference type="GO" id="GO:0005737">
    <property type="term" value="C:cytoplasm"/>
    <property type="evidence" value="ECO:0000318"/>
    <property type="project" value="GO_Central"/>
</dbReference>
<dbReference type="GO" id="GO:0005634">
    <property type="term" value="C:nucleus"/>
    <property type="evidence" value="ECO:0007669"/>
    <property type="project" value="UniProtKB-SubCell"/>
</dbReference>
<dbReference type="GO" id="GO:0052689">
    <property type="term" value="F:carboxylic ester hydrolase activity"/>
    <property type="evidence" value="ECO:0000318"/>
    <property type="project" value="GO_Central"/>
</dbReference>
<dbReference type="GO" id="GO:0008474">
    <property type="term" value="F:palmitoyl-(protein) hydrolase activity"/>
    <property type="evidence" value="ECO:0000318"/>
    <property type="project" value="GO_Central"/>
</dbReference>
<dbReference type="GO" id="GO:0006631">
    <property type="term" value="P:fatty acid metabolic process"/>
    <property type="evidence" value="ECO:0007669"/>
    <property type="project" value="UniProtKB-KW"/>
</dbReference>
<dbReference type="FunFam" id="3.40.50.1820:FF:000010">
    <property type="entry name" value="Acyl-protein thioesterase 2"/>
    <property type="match status" value="1"/>
</dbReference>
<dbReference type="Gene3D" id="3.40.50.1820">
    <property type="entry name" value="alpha/beta hydrolase"/>
    <property type="match status" value="1"/>
</dbReference>
<dbReference type="InterPro" id="IPR029058">
    <property type="entry name" value="AB_hydrolase_fold"/>
</dbReference>
<dbReference type="InterPro" id="IPR050565">
    <property type="entry name" value="LYPA1-2/EST-like"/>
</dbReference>
<dbReference type="InterPro" id="IPR003140">
    <property type="entry name" value="PLipase/COase/thioEstase"/>
</dbReference>
<dbReference type="PANTHER" id="PTHR10655:SF17">
    <property type="entry name" value="LYSOPHOSPHOLIPASE-LIKE PROTEIN 1"/>
    <property type="match status" value="1"/>
</dbReference>
<dbReference type="PANTHER" id="PTHR10655">
    <property type="entry name" value="LYSOPHOSPHOLIPASE-RELATED"/>
    <property type="match status" value="1"/>
</dbReference>
<dbReference type="Pfam" id="PF02230">
    <property type="entry name" value="Abhydrolase_2"/>
    <property type="match status" value="1"/>
</dbReference>
<dbReference type="SUPFAM" id="SSF53474">
    <property type="entry name" value="alpha/beta-Hydrolases"/>
    <property type="match status" value="1"/>
</dbReference>